<proteinExistence type="inferred from homology"/>
<reference key="1">
    <citation type="journal article" date="2008" name="J. Bacteriol.">
        <title>Complete genome sequence of uropathogenic Proteus mirabilis, a master of both adherence and motility.</title>
        <authorList>
            <person name="Pearson M.M."/>
            <person name="Sebaihia M."/>
            <person name="Churcher C."/>
            <person name="Quail M.A."/>
            <person name="Seshasayee A.S."/>
            <person name="Luscombe N.M."/>
            <person name="Abdellah Z."/>
            <person name="Arrosmith C."/>
            <person name="Atkin B."/>
            <person name="Chillingworth T."/>
            <person name="Hauser H."/>
            <person name="Jagels K."/>
            <person name="Moule S."/>
            <person name="Mungall K."/>
            <person name="Norbertczak H."/>
            <person name="Rabbinowitsch E."/>
            <person name="Walker D."/>
            <person name="Whithead S."/>
            <person name="Thomson N.R."/>
            <person name="Rather P.N."/>
            <person name="Parkhill J."/>
            <person name="Mobley H.L.T."/>
        </authorList>
    </citation>
    <scope>NUCLEOTIDE SEQUENCE [LARGE SCALE GENOMIC DNA]</scope>
    <source>
        <strain>HI4320</strain>
    </source>
</reference>
<protein>
    <recommendedName>
        <fullName evidence="1">YcgL domain-containing protein PMI1171</fullName>
    </recommendedName>
</protein>
<sequence length="97" mass="11350">MKMICAIYRSTKRDQTYLYIEKKDDFSRIPEELLQSFGEPQFAMLLDLAQRQRLANADIEKVKQALTDQGFYLQVPPPVESMLNAYLDELKNSEKTE</sequence>
<name>Y1171_PROMH</name>
<keyword id="KW-1185">Reference proteome</keyword>
<gene>
    <name type="ordered locus">PMI1171</name>
</gene>
<feature type="chain" id="PRO_0000375324" description="YcgL domain-containing protein PMI1171">
    <location>
        <begin position="1"/>
        <end position="97"/>
    </location>
</feature>
<feature type="domain" description="YcgL" evidence="1">
    <location>
        <begin position="3"/>
        <end position="87"/>
    </location>
</feature>
<accession>B4EVV8</accession>
<evidence type="ECO:0000255" key="1">
    <source>
        <dbReference type="HAMAP-Rule" id="MF_01866"/>
    </source>
</evidence>
<organism>
    <name type="scientific">Proteus mirabilis (strain HI4320)</name>
    <dbReference type="NCBI Taxonomy" id="529507"/>
    <lineage>
        <taxon>Bacteria</taxon>
        <taxon>Pseudomonadati</taxon>
        <taxon>Pseudomonadota</taxon>
        <taxon>Gammaproteobacteria</taxon>
        <taxon>Enterobacterales</taxon>
        <taxon>Morganellaceae</taxon>
        <taxon>Proteus</taxon>
    </lineage>
</organism>
<dbReference type="EMBL" id="AM942759">
    <property type="protein sequence ID" value="CAR42502.1"/>
    <property type="molecule type" value="Genomic_DNA"/>
</dbReference>
<dbReference type="SMR" id="B4EVV8"/>
<dbReference type="EnsemblBacteria" id="CAR42502">
    <property type="protein sequence ID" value="CAR42502"/>
    <property type="gene ID" value="PMI1171"/>
</dbReference>
<dbReference type="KEGG" id="pmr:PMI1171"/>
<dbReference type="eggNOG" id="COG3100">
    <property type="taxonomic scope" value="Bacteria"/>
</dbReference>
<dbReference type="HOGENOM" id="CLU_155118_1_0_6"/>
<dbReference type="Proteomes" id="UP000008319">
    <property type="component" value="Chromosome"/>
</dbReference>
<dbReference type="Gene3D" id="3.10.510.20">
    <property type="entry name" value="YcgL domain"/>
    <property type="match status" value="1"/>
</dbReference>
<dbReference type="HAMAP" id="MF_01866">
    <property type="entry name" value="UPF0745"/>
    <property type="match status" value="1"/>
</dbReference>
<dbReference type="InterPro" id="IPR038068">
    <property type="entry name" value="YcgL-like_sf"/>
</dbReference>
<dbReference type="InterPro" id="IPR027354">
    <property type="entry name" value="YcgL_dom"/>
</dbReference>
<dbReference type="PANTHER" id="PTHR38109">
    <property type="entry name" value="PROTEIN YCGL"/>
    <property type="match status" value="1"/>
</dbReference>
<dbReference type="PANTHER" id="PTHR38109:SF1">
    <property type="entry name" value="PROTEIN YCGL"/>
    <property type="match status" value="1"/>
</dbReference>
<dbReference type="Pfam" id="PF05166">
    <property type="entry name" value="YcgL"/>
    <property type="match status" value="1"/>
</dbReference>
<dbReference type="SUPFAM" id="SSF160191">
    <property type="entry name" value="YcgL-like"/>
    <property type="match status" value="1"/>
</dbReference>
<dbReference type="PROSITE" id="PS51648">
    <property type="entry name" value="YCGL"/>
    <property type="match status" value="1"/>
</dbReference>